<keyword id="KW-0175">Coiled coil</keyword>
<keyword id="KW-0489">Methyltransferase</keyword>
<keyword id="KW-0539">Nucleus</keyword>
<keyword id="KW-1185">Reference proteome</keyword>
<keyword id="KW-0690">Ribosome biogenesis</keyword>
<keyword id="KW-0698">rRNA processing</keyword>
<keyword id="KW-0949">S-adenosyl-L-methionine</keyword>
<keyword id="KW-0808">Transferase</keyword>
<comment type="function">
    <text evidence="1">Required for proper assembly of pre-ribosomal particles during the biogenesis of the 60S ribosomal subunit.</text>
</comment>
<comment type="catalytic activity">
    <reaction evidence="1">
        <text>a ribonucleotide in rRNA + S-adenosyl-L-methionine = a 2'-O-methylribonucleotide in rRNA + S-adenosyl-L-homocysteine + H(+)</text>
        <dbReference type="Rhea" id="RHEA:48628"/>
        <dbReference type="Rhea" id="RHEA-COMP:12164"/>
        <dbReference type="Rhea" id="RHEA-COMP:12165"/>
        <dbReference type="ChEBI" id="CHEBI:15378"/>
        <dbReference type="ChEBI" id="CHEBI:57856"/>
        <dbReference type="ChEBI" id="CHEBI:59789"/>
        <dbReference type="ChEBI" id="CHEBI:90675"/>
        <dbReference type="ChEBI" id="CHEBI:90676"/>
    </reaction>
</comment>
<comment type="subunit">
    <text evidence="1">Component of the nucleolar and nucleoplasmic pre-60S ribosomal particle.</text>
</comment>
<comment type="subcellular location">
    <subcellularLocation>
        <location evidence="1">Nucleus</location>
        <location evidence="1">Nucleolus</location>
    </subcellularLocation>
</comment>
<comment type="similarity">
    <text evidence="1">Belongs to the class I-like SAM-binding methyltransferase superfamily. RNA methyltransferase RlmE family. SPB1 subfamily.</text>
</comment>
<proteinExistence type="inferred from homology"/>
<reference key="1">
    <citation type="journal article" date="2006" name="Nature">
        <title>Insights from the genome of the biotrophic fungal plant pathogen Ustilago maydis.</title>
        <authorList>
            <person name="Kaemper J."/>
            <person name="Kahmann R."/>
            <person name="Boelker M."/>
            <person name="Ma L.-J."/>
            <person name="Brefort T."/>
            <person name="Saville B.J."/>
            <person name="Banuett F."/>
            <person name="Kronstad J.W."/>
            <person name="Gold S.E."/>
            <person name="Mueller O."/>
            <person name="Perlin M.H."/>
            <person name="Woesten H.A.B."/>
            <person name="de Vries R."/>
            <person name="Ruiz-Herrera J."/>
            <person name="Reynaga-Pena C.G."/>
            <person name="Snetselaar K."/>
            <person name="McCann M."/>
            <person name="Perez-Martin J."/>
            <person name="Feldbruegge M."/>
            <person name="Basse C.W."/>
            <person name="Steinberg G."/>
            <person name="Ibeas J.I."/>
            <person name="Holloman W."/>
            <person name="Guzman P."/>
            <person name="Farman M.L."/>
            <person name="Stajich J.E."/>
            <person name="Sentandreu R."/>
            <person name="Gonzalez-Prieto J.M."/>
            <person name="Kennell J.C."/>
            <person name="Molina L."/>
            <person name="Schirawski J."/>
            <person name="Mendoza-Mendoza A."/>
            <person name="Greilinger D."/>
            <person name="Muench K."/>
            <person name="Roessel N."/>
            <person name="Scherer M."/>
            <person name="Vranes M."/>
            <person name="Ladendorf O."/>
            <person name="Vincon V."/>
            <person name="Fuchs U."/>
            <person name="Sandrock B."/>
            <person name="Meng S."/>
            <person name="Ho E.C.H."/>
            <person name="Cahill M.J."/>
            <person name="Boyce K.J."/>
            <person name="Klose J."/>
            <person name="Klosterman S.J."/>
            <person name="Deelstra H.J."/>
            <person name="Ortiz-Castellanos L."/>
            <person name="Li W."/>
            <person name="Sanchez-Alonso P."/>
            <person name="Schreier P.H."/>
            <person name="Haeuser-Hahn I."/>
            <person name="Vaupel M."/>
            <person name="Koopmann E."/>
            <person name="Friedrich G."/>
            <person name="Voss H."/>
            <person name="Schlueter T."/>
            <person name="Margolis J."/>
            <person name="Platt D."/>
            <person name="Swimmer C."/>
            <person name="Gnirke A."/>
            <person name="Chen F."/>
            <person name="Vysotskaia V."/>
            <person name="Mannhaupt G."/>
            <person name="Gueldener U."/>
            <person name="Muensterkoetter M."/>
            <person name="Haase D."/>
            <person name="Oesterheld M."/>
            <person name="Mewes H.-W."/>
            <person name="Mauceli E.W."/>
            <person name="DeCaprio D."/>
            <person name="Wade C.M."/>
            <person name="Butler J."/>
            <person name="Young S.K."/>
            <person name="Jaffe D.B."/>
            <person name="Calvo S.E."/>
            <person name="Nusbaum C."/>
            <person name="Galagan J.E."/>
            <person name="Birren B.W."/>
        </authorList>
    </citation>
    <scope>NUCLEOTIDE SEQUENCE [LARGE SCALE GENOMIC DNA]</scope>
    <source>
        <strain>DSM 14603 / FGSC 9021 / UM521</strain>
    </source>
</reference>
<reference key="2">
    <citation type="submission" date="2014-09" db="EMBL/GenBank/DDBJ databases">
        <authorList>
            <person name="Gueldener U."/>
            <person name="Muensterkoetter M."/>
            <person name="Walter M.C."/>
            <person name="Mannhaupt G."/>
            <person name="Kahmann R."/>
        </authorList>
    </citation>
    <scope>GENOME REANNOTATION</scope>
    <source>
        <strain>DSM 14603 / FGSC 9021 / UM521</strain>
    </source>
</reference>
<gene>
    <name evidence="1" type="primary">SPB1</name>
    <name type="ORF">UMAG_04298</name>
</gene>
<dbReference type="EC" id="2.1.1.-" evidence="1"/>
<dbReference type="EMBL" id="CM003151">
    <property type="protein sequence ID" value="KIS67804.1"/>
    <property type="molecule type" value="Genomic_DNA"/>
</dbReference>
<dbReference type="RefSeq" id="XP_011390751.1">
    <property type="nucleotide sequence ID" value="XM_011392449.1"/>
</dbReference>
<dbReference type="SMR" id="Q4P6G5"/>
<dbReference type="FunCoup" id="Q4P6G5">
    <property type="interactions" value="571"/>
</dbReference>
<dbReference type="STRING" id="237631.Q4P6G5"/>
<dbReference type="EnsemblFungi" id="KIS67804">
    <property type="protein sequence ID" value="KIS67804"/>
    <property type="gene ID" value="UMAG_04298"/>
</dbReference>
<dbReference type="GeneID" id="23564522"/>
<dbReference type="KEGG" id="uma:UMAG_04298"/>
<dbReference type="VEuPathDB" id="FungiDB:UMAG_04298"/>
<dbReference type="eggNOG" id="KOG1098">
    <property type="taxonomic scope" value="Eukaryota"/>
</dbReference>
<dbReference type="HOGENOM" id="CLU_009422_8_1_1"/>
<dbReference type="InParanoid" id="Q4P6G5"/>
<dbReference type="OMA" id="QRKDKYY"/>
<dbReference type="OrthoDB" id="1287559at2759"/>
<dbReference type="Proteomes" id="UP000000561">
    <property type="component" value="Chromosome 12"/>
</dbReference>
<dbReference type="GO" id="GO:0005730">
    <property type="term" value="C:nucleolus"/>
    <property type="evidence" value="ECO:0000318"/>
    <property type="project" value="GO_Central"/>
</dbReference>
<dbReference type="GO" id="GO:0030687">
    <property type="term" value="C:preribosome, large subunit precursor"/>
    <property type="evidence" value="ECO:0000318"/>
    <property type="project" value="GO_Central"/>
</dbReference>
<dbReference type="GO" id="GO:0016435">
    <property type="term" value="F:rRNA (guanine) methyltransferase activity"/>
    <property type="evidence" value="ECO:0000318"/>
    <property type="project" value="GO_Central"/>
</dbReference>
<dbReference type="GO" id="GO:0070039">
    <property type="term" value="F:rRNA (guanosine-2'-O-)-methyltransferase activity"/>
    <property type="evidence" value="ECO:0007669"/>
    <property type="project" value="UniProtKB-UniRule"/>
</dbReference>
<dbReference type="GO" id="GO:0008650">
    <property type="term" value="F:rRNA (uridine-2'-O-)-methyltransferase activity"/>
    <property type="evidence" value="ECO:0000318"/>
    <property type="project" value="GO_Central"/>
</dbReference>
<dbReference type="GO" id="GO:0000466">
    <property type="term" value="P:maturation of 5.8S rRNA from tricistronic rRNA transcript (SSU-rRNA, 5.8S rRNA, LSU-rRNA)"/>
    <property type="evidence" value="ECO:0000318"/>
    <property type="project" value="GO_Central"/>
</dbReference>
<dbReference type="GO" id="GO:0000463">
    <property type="term" value="P:maturation of LSU-rRNA from tricistronic rRNA transcript (SSU-rRNA, 5.8S rRNA, LSU-rRNA)"/>
    <property type="evidence" value="ECO:0000318"/>
    <property type="project" value="GO_Central"/>
</dbReference>
<dbReference type="GO" id="GO:0031167">
    <property type="term" value="P:rRNA methylation"/>
    <property type="evidence" value="ECO:0000318"/>
    <property type="project" value="GO_Central"/>
</dbReference>
<dbReference type="FunFam" id="3.40.50.150:FF:000004">
    <property type="entry name" value="AdoMet-dependent rRNA methyltransferase SPB1"/>
    <property type="match status" value="1"/>
</dbReference>
<dbReference type="Gene3D" id="3.40.50.150">
    <property type="entry name" value="Vaccinia Virus protein VP39"/>
    <property type="match status" value="1"/>
</dbReference>
<dbReference type="HAMAP" id="MF_01547">
    <property type="entry name" value="RNA_methyltr_E"/>
    <property type="match status" value="1"/>
</dbReference>
<dbReference type="HAMAP" id="MF_03163">
    <property type="entry name" value="RNA_methyltr_E_SPB1"/>
    <property type="match status" value="1"/>
</dbReference>
<dbReference type="InterPro" id="IPR050082">
    <property type="entry name" value="RNA_methyltr_RlmE"/>
</dbReference>
<dbReference type="InterPro" id="IPR002877">
    <property type="entry name" value="RNA_MeTrfase_FtsJ_dom"/>
</dbReference>
<dbReference type="InterPro" id="IPR015507">
    <property type="entry name" value="rRNA-MeTfrase_E"/>
</dbReference>
<dbReference type="InterPro" id="IPR012920">
    <property type="entry name" value="rRNA_MeTfrase_SPB1-like_C"/>
</dbReference>
<dbReference type="InterPro" id="IPR024576">
    <property type="entry name" value="rRNA_MeTfrase_Spb1_DUF3381"/>
</dbReference>
<dbReference type="InterPro" id="IPR029063">
    <property type="entry name" value="SAM-dependent_MTases_sf"/>
</dbReference>
<dbReference type="InterPro" id="IPR028589">
    <property type="entry name" value="SPB1-like"/>
</dbReference>
<dbReference type="PANTHER" id="PTHR10920:SF13">
    <property type="entry name" value="PRE-RRNA 2'-O-RIBOSE RNA METHYLTRANSFERASE FTSJ3"/>
    <property type="match status" value="1"/>
</dbReference>
<dbReference type="PANTHER" id="PTHR10920">
    <property type="entry name" value="RIBOSOMAL RNA METHYLTRANSFERASE"/>
    <property type="match status" value="1"/>
</dbReference>
<dbReference type="Pfam" id="PF11861">
    <property type="entry name" value="DUF3381"/>
    <property type="match status" value="1"/>
</dbReference>
<dbReference type="Pfam" id="PF01728">
    <property type="entry name" value="FtsJ"/>
    <property type="match status" value="1"/>
</dbReference>
<dbReference type="Pfam" id="PF07780">
    <property type="entry name" value="Spb1_C"/>
    <property type="match status" value="1"/>
</dbReference>
<dbReference type="SUPFAM" id="SSF53335">
    <property type="entry name" value="S-adenosyl-L-methionine-dependent methyltransferases"/>
    <property type="match status" value="1"/>
</dbReference>
<evidence type="ECO:0000255" key="1">
    <source>
        <dbReference type="HAMAP-Rule" id="MF_03163"/>
    </source>
</evidence>
<evidence type="ECO:0000256" key="2">
    <source>
        <dbReference type="SAM" id="MobiDB-lite"/>
    </source>
</evidence>
<feature type="chain" id="PRO_0000155602" description="AdoMet-dependent rRNA methyltransferase SPB1">
    <location>
        <begin position="1"/>
        <end position="921"/>
    </location>
</feature>
<feature type="region of interest" description="Disordered" evidence="2">
    <location>
        <begin position="448"/>
        <end position="476"/>
    </location>
</feature>
<feature type="region of interest" description="Disordered" evidence="2">
    <location>
        <begin position="491"/>
        <end position="604"/>
    </location>
</feature>
<feature type="region of interest" description="Disordered" evidence="2">
    <location>
        <begin position="635"/>
        <end position="713"/>
    </location>
</feature>
<feature type="region of interest" description="Disordered" evidence="2">
    <location>
        <begin position="814"/>
        <end position="835"/>
    </location>
</feature>
<feature type="region of interest" description="Disordered" evidence="2">
    <location>
        <begin position="866"/>
        <end position="921"/>
    </location>
</feature>
<feature type="coiled-coil region" evidence="1">
    <location>
        <begin position="367"/>
        <end position="414"/>
    </location>
</feature>
<feature type="coiled-coil region" evidence="1">
    <location>
        <begin position="796"/>
        <end position="835"/>
    </location>
</feature>
<feature type="compositionally biased region" description="Basic and acidic residues" evidence="2">
    <location>
        <begin position="491"/>
        <end position="522"/>
    </location>
</feature>
<feature type="compositionally biased region" description="Acidic residues" evidence="2">
    <location>
        <begin position="523"/>
        <end position="542"/>
    </location>
</feature>
<feature type="compositionally biased region" description="Acidic residues" evidence="2">
    <location>
        <begin position="555"/>
        <end position="568"/>
    </location>
</feature>
<feature type="compositionally biased region" description="Acidic residues" evidence="2">
    <location>
        <begin position="635"/>
        <end position="684"/>
    </location>
</feature>
<feature type="compositionally biased region" description="Acidic residues" evidence="2">
    <location>
        <begin position="697"/>
        <end position="708"/>
    </location>
</feature>
<feature type="compositionally biased region" description="Basic and acidic residues" evidence="2">
    <location>
        <begin position="814"/>
        <end position="823"/>
    </location>
</feature>
<feature type="compositionally biased region" description="Basic residues" evidence="2">
    <location>
        <begin position="868"/>
        <end position="879"/>
    </location>
</feature>
<feature type="compositionally biased region" description="Basic and acidic residues" evidence="2">
    <location>
        <begin position="880"/>
        <end position="892"/>
    </location>
</feature>
<feature type="active site" description="Proton acceptor" evidence="1">
    <location>
        <position position="159"/>
    </location>
</feature>
<feature type="binding site" evidence="1">
    <location>
        <position position="58"/>
    </location>
    <ligand>
        <name>S-adenosyl-L-methionine</name>
        <dbReference type="ChEBI" id="CHEBI:59789"/>
    </ligand>
</feature>
<feature type="binding site" evidence="1">
    <location>
        <position position="60"/>
    </location>
    <ligand>
        <name>S-adenosyl-L-methionine</name>
        <dbReference type="ChEBI" id="CHEBI:59789"/>
    </ligand>
</feature>
<feature type="binding site" evidence="1">
    <location>
        <position position="78"/>
    </location>
    <ligand>
        <name>S-adenosyl-L-methionine</name>
        <dbReference type="ChEBI" id="CHEBI:59789"/>
    </ligand>
</feature>
<feature type="binding site" evidence="1">
    <location>
        <position position="94"/>
    </location>
    <ligand>
        <name>S-adenosyl-L-methionine</name>
        <dbReference type="ChEBI" id="CHEBI:59789"/>
    </ligand>
</feature>
<feature type="binding site" evidence="1">
    <location>
        <position position="119"/>
    </location>
    <ligand>
        <name>S-adenosyl-L-methionine</name>
        <dbReference type="ChEBI" id="CHEBI:59789"/>
    </ligand>
</feature>
<name>SPB1_MYCMD</name>
<protein>
    <recommendedName>
        <fullName evidence="1">AdoMet-dependent rRNA methyltransferase SPB1</fullName>
        <ecNumber evidence="1">2.1.1.-</ecNumber>
    </recommendedName>
    <alternativeName>
        <fullName evidence="1">2'-O-ribose RNA methyltransferase</fullName>
    </alternativeName>
    <alternativeName>
        <fullName evidence="1">S-adenosyl-L-methionine-dependent methyltransferase</fullName>
    </alternativeName>
</protein>
<sequence length="921" mass="105145">MGKKQEKKTAKGRLDKFYWLAKEQGYRSRAAFKLVQLNKKFNFLEKARCCIDLCAAPGGWLQVASKFMPANSLIVGVDLVPIKPIPRTITFAEDINSYKCRDQLRQILKDWKADIVIHDGAPNVGTAWVQDAYAQSELTLQSLRLAVEFLTAGGTFVTKVFRSKDYNNLLWVFNQLFKKVEATKPSSSRNVSAEIFVVCQGYKNPARIDPKFLDPRHVFKELDPASLADQDQEAGVPLSLKGTSAGNAHANVFEPKKIRRNREGYADGDYTLFHSLDAMDFIKGQDVIGMLGSYNQISFESDESKKLLSLPDTNDEMRENCSDLKVLGKKDFRNLMNWRKEVRLALGIDLPKSKHQDLAEQTQTVEVEEMDEDDQIDDELARLNEEAARKARKERRRKNELRQKKILKMQLQMTTPMDIGMDVMDDQLGAGNGDMFEISSGERVSKKALIQQADVSDDESETIVSSQHTDDDDPETRARRLDAEMDALYDEFKQKQSERDAKFRAKQARLQDAKNDSWHGIKDDEENDEDDDEANLSDESEGGYDLVQRRKEQEETFDTDDEEDEEDERLEREATQHSKKRKRDLAAPTADSFEMDAKPPKRSLVHSLVSDADVSAQQSREASIWFDNPLFKDLELDEQDAQEALEDDQDDEDAWEEEQDDEDDAEESDSEVEGEQEVEDDDFEVVPQDQEEHAIPDEEWDLNGEDEEAGKQKRIKDHGLATAEAVALAQALVNRQITKEDLMDQGFSKHNFVDKDGLPTWFLDDEQKHYKANIPITKEAIQALRERQRALDARPIKKVAEAKARKKMRTLRRLEKAQKKAETINENEDISEKEKSNTINKLLAKSVKGAQKKKEVQLVVAKGVNRGLKGRPKGTKGRYKMVDPRMKKELRAFKRKAKRDGKKLGSSNSKPRVPKGYGPRN</sequence>
<accession>Q4P6G5</accession>
<accession>A0A0D1DU07</accession>
<organism>
    <name type="scientific">Mycosarcoma maydis</name>
    <name type="common">Corn smut fungus</name>
    <name type="synonym">Ustilago maydis</name>
    <dbReference type="NCBI Taxonomy" id="5270"/>
    <lineage>
        <taxon>Eukaryota</taxon>
        <taxon>Fungi</taxon>
        <taxon>Dikarya</taxon>
        <taxon>Basidiomycota</taxon>
        <taxon>Ustilaginomycotina</taxon>
        <taxon>Ustilaginomycetes</taxon>
        <taxon>Ustilaginales</taxon>
        <taxon>Ustilaginaceae</taxon>
        <taxon>Mycosarcoma</taxon>
    </lineage>
</organism>